<keyword id="KW-0963">Cytoplasm</keyword>
<keyword id="KW-0489">Methyltransferase</keyword>
<keyword id="KW-0949">S-adenosyl-L-methionine</keyword>
<keyword id="KW-0808">Transferase</keyword>
<feature type="chain" id="PRO_1000093265" description="Protein-L-isoaspartate O-methyltransferase">
    <location>
        <begin position="1"/>
        <end position="211"/>
    </location>
</feature>
<feature type="active site" evidence="1">
    <location>
        <position position="60"/>
    </location>
</feature>
<organism>
    <name type="scientific">Pseudomonas aeruginosa (strain UCBPP-PA14)</name>
    <dbReference type="NCBI Taxonomy" id="208963"/>
    <lineage>
        <taxon>Bacteria</taxon>
        <taxon>Pseudomonadati</taxon>
        <taxon>Pseudomonadota</taxon>
        <taxon>Gammaproteobacteria</taxon>
        <taxon>Pseudomonadales</taxon>
        <taxon>Pseudomonadaceae</taxon>
        <taxon>Pseudomonas</taxon>
    </lineage>
</organism>
<sequence length="211" mass="23407">MTSQRTRERLIQRLYEEGLSNAHVLEVIRRTPRHLFVDEALSHRAYEDTALPIGHNQTISQPFMVARMTELLLAAGPLDKVMEIGTGSGYQTAVLAQLVERVFSVERIQALQDKAKERLAELNLRNVVFRWGDGWEGWSALAPYNGIIVTAAATEVPQSLLDQLAPGGRLVIPVGGGEVQQLMLIVRTEDGFSRQVLDSVRFVPLLNGPIA</sequence>
<name>PIMT_PSEAB</name>
<proteinExistence type="inferred from homology"/>
<accession>Q02R96</accession>
<evidence type="ECO:0000255" key="1">
    <source>
        <dbReference type="HAMAP-Rule" id="MF_00090"/>
    </source>
</evidence>
<gene>
    <name evidence="1" type="primary">pcm</name>
    <name type="ordered locus">PA14_17460</name>
</gene>
<protein>
    <recommendedName>
        <fullName evidence="1">Protein-L-isoaspartate O-methyltransferase</fullName>
        <ecNumber evidence="1">2.1.1.77</ecNumber>
    </recommendedName>
    <alternativeName>
        <fullName evidence="1">L-isoaspartyl protein carboxyl methyltransferase</fullName>
    </alternativeName>
    <alternativeName>
        <fullName evidence="1">Protein L-isoaspartyl methyltransferase</fullName>
    </alternativeName>
    <alternativeName>
        <fullName evidence="1">Protein-beta-aspartate methyltransferase</fullName>
        <shortName evidence="1">PIMT</shortName>
    </alternativeName>
</protein>
<dbReference type="EC" id="2.1.1.77" evidence="1"/>
<dbReference type="EMBL" id="CP000438">
    <property type="protein sequence ID" value="ABJ12857.1"/>
    <property type="molecule type" value="Genomic_DNA"/>
</dbReference>
<dbReference type="RefSeq" id="WP_003098558.1">
    <property type="nucleotide sequence ID" value="NZ_CP034244.1"/>
</dbReference>
<dbReference type="SMR" id="Q02R96"/>
<dbReference type="KEGG" id="pau:PA14_17460"/>
<dbReference type="PseudoCAP" id="PA14_17460"/>
<dbReference type="HOGENOM" id="CLU_055432_2_0_6"/>
<dbReference type="BioCyc" id="PAER208963:G1G74-1437-MONOMER"/>
<dbReference type="Proteomes" id="UP000000653">
    <property type="component" value="Chromosome"/>
</dbReference>
<dbReference type="GO" id="GO:0005737">
    <property type="term" value="C:cytoplasm"/>
    <property type="evidence" value="ECO:0007669"/>
    <property type="project" value="UniProtKB-SubCell"/>
</dbReference>
<dbReference type="GO" id="GO:0004719">
    <property type="term" value="F:protein-L-isoaspartate (D-aspartate) O-methyltransferase activity"/>
    <property type="evidence" value="ECO:0007669"/>
    <property type="project" value="UniProtKB-UniRule"/>
</dbReference>
<dbReference type="GO" id="GO:0032259">
    <property type="term" value="P:methylation"/>
    <property type="evidence" value="ECO:0007669"/>
    <property type="project" value="UniProtKB-KW"/>
</dbReference>
<dbReference type="GO" id="GO:0036211">
    <property type="term" value="P:protein modification process"/>
    <property type="evidence" value="ECO:0007669"/>
    <property type="project" value="UniProtKB-UniRule"/>
</dbReference>
<dbReference type="GO" id="GO:0030091">
    <property type="term" value="P:protein repair"/>
    <property type="evidence" value="ECO:0007669"/>
    <property type="project" value="UniProtKB-UniRule"/>
</dbReference>
<dbReference type="CDD" id="cd02440">
    <property type="entry name" value="AdoMet_MTases"/>
    <property type="match status" value="1"/>
</dbReference>
<dbReference type="FunFam" id="3.40.50.150:FF:000010">
    <property type="entry name" value="Protein-L-isoaspartate O-methyltransferase"/>
    <property type="match status" value="1"/>
</dbReference>
<dbReference type="Gene3D" id="3.40.50.150">
    <property type="entry name" value="Vaccinia Virus protein VP39"/>
    <property type="match status" value="1"/>
</dbReference>
<dbReference type="HAMAP" id="MF_00090">
    <property type="entry name" value="PIMT"/>
    <property type="match status" value="1"/>
</dbReference>
<dbReference type="InterPro" id="IPR000682">
    <property type="entry name" value="PCMT"/>
</dbReference>
<dbReference type="InterPro" id="IPR029063">
    <property type="entry name" value="SAM-dependent_MTases_sf"/>
</dbReference>
<dbReference type="NCBIfam" id="TIGR00080">
    <property type="entry name" value="pimt"/>
    <property type="match status" value="1"/>
</dbReference>
<dbReference type="NCBIfam" id="NF001453">
    <property type="entry name" value="PRK00312.1"/>
    <property type="match status" value="1"/>
</dbReference>
<dbReference type="PANTHER" id="PTHR11579">
    <property type="entry name" value="PROTEIN-L-ISOASPARTATE O-METHYLTRANSFERASE"/>
    <property type="match status" value="1"/>
</dbReference>
<dbReference type="PANTHER" id="PTHR11579:SF0">
    <property type="entry name" value="PROTEIN-L-ISOASPARTATE(D-ASPARTATE) O-METHYLTRANSFERASE"/>
    <property type="match status" value="1"/>
</dbReference>
<dbReference type="Pfam" id="PF01135">
    <property type="entry name" value="PCMT"/>
    <property type="match status" value="1"/>
</dbReference>
<dbReference type="SUPFAM" id="SSF53335">
    <property type="entry name" value="S-adenosyl-L-methionine-dependent methyltransferases"/>
    <property type="match status" value="1"/>
</dbReference>
<dbReference type="PROSITE" id="PS01279">
    <property type="entry name" value="PCMT"/>
    <property type="match status" value="1"/>
</dbReference>
<reference key="1">
    <citation type="journal article" date="2006" name="Genome Biol.">
        <title>Genomic analysis reveals that Pseudomonas aeruginosa virulence is combinatorial.</title>
        <authorList>
            <person name="Lee D.G."/>
            <person name="Urbach J.M."/>
            <person name="Wu G."/>
            <person name="Liberati N.T."/>
            <person name="Feinbaum R.L."/>
            <person name="Miyata S."/>
            <person name="Diggins L.T."/>
            <person name="He J."/>
            <person name="Saucier M."/>
            <person name="Deziel E."/>
            <person name="Friedman L."/>
            <person name="Li L."/>
            <person name="Grills G."/>
            <person name="Montgomery K."/>
            <person name="Kucherlapati R."/>
            <person name="Rahme L.G."/>
            <person name="Ausubel F.M."/>
        </authorList>
    </citation>
    <scope>NUCLEOTIDE SEQUENCE [LARGE SCALE GENOMIC DNA]</scope>
    <source>
        <strain>UCBPP-PA14</strain>
    </source>
</reference>
<comment type="function">
    <text evidence="1">Catalyzes the methyl esterification of L-isoaspartyl residues in peptides and proteins that result from spontaneous decomposition of normal L-aspartyl and L-asparaginyl residues. It plays a role in the repair and/or degradation of damaged proteins.</text>
</comment>
<comment type="catalytic activity">
    <reaction evidence="1">
        <text>[protein]-L-isoaspartate + S-adenosyl-L-methionine = [protein]-L-isoaspartate alpha-methyl ester + S-adenosyl-L-homocysteine</text>
        <dbReference type="Rhea" id="RHEA:12705"/>
        <dbReference type="Rhea" id="RHEA-COMP:12143"/>
        <dbReference type="Rhea" id="RHEA-COMP:12144"/>
        <dbReference type="ChEBI" id="CHEBI:57856"/>
        <dbReference type="ChEBI" id="CHEBI:59789"/>
        <dbReference type="ChEBI" id="CHEBI:90596"/>
        <dbReference type="ChEBI" id="CHEBI:90598"/>
        <dbReference type="EC" id="2.1.1.77"/>
    </reaction>
</comment>
<comment type="subcellular location">
    <subcellularLocation>
        <location evidence="1">Cytoplasm</location>
    </subcellularLocation>
</comment>
<comment type="similarity">
    <text evidence="1">Belongs to the methyltransferase superfamily. L-isoaspartyl/D-aspartyl protein methyltransferase family.</text>
</comment>